<keyword id="KW-0378">Hydrolase</keyword>
<keyword id="KW-0496">Mitochondrion</keyword>
<keyword id="KW-1185">Reference proteome</keyword>
<keyword id="KW-0809">Transit peptide</keyword>
<evidence type="ECO:0000250" key="1">
    <source>
        <dbReference type="UniProtKB" id="Q8N2K0"/>
    </source>
</evidence>
<evidence type="ECO:0000250" key="2">
    <source>
        <dbReference type="UniProtKB" id="Q9NUJ1"/>
    </source>
</evidence>
<evidence type="ECO:0000255" key="3"/>
<evidence type="ECO:0000305" key="4"/>
<gene>
    <name type="primary">ABHD10</name>
</gene>
<sequence>MAVARLAAVAAWVPCRSWGCAAVPFGPHRGLSALLARIPQRAPRWLPACRQKTSLSFLNRPDLPNLAYKKLKGKSPGIIFIPGYLSYMNGTKALAIEEFCKSLGHACIRFDYSGVGSSDGNSEESTLGKWRKDVLSIIDDLADGPQILVGSSLGGWLMLHAAIARPEKVVALLGVATAADTLVTKFNQLPVELKKEVEMKGVWSMPSKYSEEGVYNIQYSFIKEAEHHCLLHSPIPVNCPIRLLHGMKDDIVPWHTSMQVADRVLSTDVDVILRKHSDHRMKEKADIQLLVYTIDDLIDKLSTIVN</sequence>
<protein>
    <recommendedName>
        <fullName evidence="2">Palmitoyl-protein thioesterase ABHD10, mitochondrial</fullName>
        <ecNumber evidence="2">3.1.2.22</ecNumber>
    </recommendedName>
    <alternativeName>
        <fullName evidence="2">Acyl-protein thioesterase ABHD10</fullName>
    </alternativeName>
    <alternativeName>
        <fullName evidence="2">Alpha/beta hydrolase domain-containing protein 10</fullName>
        <shortName evidence="2">Abhydrolase domain-containing protein 10</shortName>
    </alternativeName>
    <alternativeName>
        <fullName evidence="2">Mycophenolic acid acyl-glucuronide esterase, mitochondrial</fullName>
        <ecNumber evidence="2">3.1.1.93</ecNumber>
    </alternativeName>
</protein>
<organism>
    <name type="scientific">Pongo abelii</name>
    <name type="common">Sumatran orangutan</name>
    <name type="synonym">Pongo pygmaeus abelii</name>
    <dbReference type="NCBI Taxonomy" id="9601"/>
    <lineage>
        <taxon>Eukaryota</taxon>
        <taxon>Metazoa</taxon>
        <taxon>Chordata</taxon>
        <taxon>Craniata</taxon>
        <taxon>Vertebrata</taxon>
        <taxon>Euteleostomi</taxon>
        <taxon>Mammalia</taxon>
        <taxon>Eutheria</taxon>
        <taxon>Euarchontoglires</taxon>
        <taxon>Primates</taxon>
        <taxon>Haplorrhini</taxon>
        <taxon>Catarrhini</taxon>
        <taxon>Hominidae</taxon>
        <taxon>Pongo</taxon>
    </lineage>
</organism>
<feature type="transit peptide" description="Mitochondrion" evidence="3">
    <location>
        <begin position="1"/>
        <end position="52"/>
    </location>
</feature>
<feature type="chain" id="PRO_0000280735" description="Palmitoyl-protein thioesterase ABHD10, mitochondrial">
    <location>
        <begin position="53"/>
        <end position="306"/>
    </location>
</feature>
<feature type="domain" description="AB hydrolase-1" evidence="3">
    <location>
        <begin position="78"/>
        <end position="177"/>
    </location>
</feature>
<feature type="active site" description="Charge relay system" evidence="2">
    <location>
        <position position="152"/>
    </location>
</feature>
<feature type="active site" description="Charge relay system" evidence="1">
    <location>
        <position position="249"/>
    </location>
</feature>
<feature type="active site" description="Charge relay system" evidence="1">
    <location>
        <position position="279"/>
    </location>
</feature>
<accession>Q5REX5</accession>
<proteinExistence type="evidence at transcript level"/>
<comment type="function">
    <text evidence="2">Acts as an acyl-protein thioesterase that hydrolyzes fatty acids from acylated residues in proteins. Regulates the mitochondrial S-depalmitoylation of the nucleophilic active site residue of peroxiredoxin-5/PRDX5, a key antioxidant protein, therefore modulating mitochondrial antioxidant ability. Also catalyzes the deglucuronidation of mycophenolic acid acyl-glucuronide, an active metabolite of the immunosuppressant drug mycophenolate.</text>
</comment>
<comment type="catalytic activity">
    <reaction evidence="2">
        <text>S-hexadecanoyl-L-cysteinyl-[protein] + H2O = L-cysteinyl-[protein] + hexadecanoate + H(+)</text>
        <dbReference type="Rhea" id="RHEA:19233"/>
        <dbReference type="Rhea" id="RHEA-COMP:10131"/>
        <dbReference type="Rhea" id="RHEA-COMP:11032"/>
        <dbReference type="ChEBI" id="CHEBI:7896"/>
        <dbReference type="ChEBI" id="CHEBI:15377"/>
        <dbReference type="ChEBI" id="CHEBI:15378"/>
        <dbReference type="ChEBI" id="CHEBI:29950"/>
        <dbReference type="ChEBI" id="CHEBI:74151"/>
        <dbReference type="EC" id="3.1.2.22"/>
    </reaction>
    <physiologicalReaction direction="left-to-right" evidence="2">
        <dbReference type="Rhea" id="RHEA:19234"/>
    </physiologicalReaction>
</comment>
<comment type="catalytic activity">
    <reaction evidence="2">
        <text>mycophenolic acid O-acyl-beta-D-glucuronide + H2O = mycophenolate + D-glucuronate + H(+)</text>
        <dbReference type="Rhea" id="RHEA:34179"/>
        <dbReference type="ChEBI" id="CHEBI:15377"/>
        <dbReference type="ChEBI" id="CHEBI:15378"/>
        <dbReference type="ChEBI" id="CHEBI:58720"/>
        <dbReference type="ChEBI" id="CHEBI:62932"/>
        <dbReference type="ChEBI" id="CHEBI:66982"/>
        <dbReference type="EC" id="3.1.1.93"/>
    </reaction>
    <physiologicalReaction direction="left-to-right" evidence="2">
        <dbReference type="Rhea" id="RHEA:34180"/>
    </physiologicalReaction>
</comment>
<comment type="activity regulation">
    <text evidence="2">Inhibited by palmostatin-B.</text>
</comment>
<comment type="subcellular location">
    <subcellularLocation>
        <location evidence="2">Mitochondrion</location>
    </subcellularLocation>
</comment>
<comment type="similarity">
    <text evidence="4">Belongs to the AB hydrolase superfamily.</text>
</comment>
<reference key="1">
    <citation type="submission" date="2004-11" db="EMBL/GenBank/DDBJ databases">
        <authorList>
            <consortium name="The German cDNA consortium"/>
        </authorList>
    </citation>
    <scope>NUCLEOTIDE SEQUENCE [LARGE SCALE MRNA]</scope>
    <source>
        <tissue>Kidney</tissue>
    </source>
</reference>
<dbReference type="EC" id="3.1.2.22" evidence="2"/>
<dbReference type="EC" id="3.1.1.93" evidence="2"/>
<dbReference type="EMBL" id="CR857388">
    <property type="protein sequence ID" value="CAH89682.1"/>
    <property type="molecule type" value="mRNA"/>
</dbReference>
<dbReference type="RefSeq" id="NP_001124761.1">
    <property type="nucleotide sequence ID" value="NM_001131289.1"/>
</dbReference>
<dbReference type="SMR" id="Q5REX5"/>
<dbReference type="FunCoup" id="Q5REX5">
    <property type="interactions" value="1438"/>
</dbReference>
<dbReference type="STRING" id="9601.ENSPPYP00000015158"/>
<dbReference type="ESTHER" id="ponab-abhda">
    <property type="family name" value="ABHD10"/>
</dbReference>
<dbReference type="MEROPS" id="S09.023"/>
<dbReference type="GeneID" id="100171612"/>
<dbReference type="KEGG" id="pon:100171612"/>
<dbReference type="CTD" id="55347"/>
<dbReference type="eggNOG" id="ENOG502QT21">
    <property type="taxonomic scope" value="Eukaryota"/>
</dbReference>
<dbReference type="InParanoid" id="Q5REX5"/>
<dbReference type="OrthoDB" id="408373at2759"/>
<dbReference type="Proteomes" id="UP000001595">
    <property type="component" value="Unplaced"/>
</dbReference>
<dbReference type="GO" id="GO:0005739">
    <property type="term" value="C:mitochondrion"/>
    <property type="evidence" value="ECO:0000250"/>
    <property type="project" value="UniProtKB"/>
</dbReference>
<dbReference type="GO" id="GO:0004553">
    <property type="term" value="F:hydrolase activity, hydrolyzing O-glycosyl compounds"/>
    <property type="evidence" value="ECO:0007669"/>
    <property type="project" value="TreeGrafter"/>
</dbReference>
<dbReference type="GO" id="GO:0102390">
    <property type="term" value="F:mycophenolic acid acyl-glucuronide esterase activity"/>
    <property type="evidence" value="ECO:0007669"/>
    <property type="project" value="UniProtKB-EC"/>
</dbReference>
<dbReference type="GO" id="GO:0008474">
    <property type="term" value="F:palmitoyl-(protein) hydrolase activity"/>
    <property type="evidence" value="ECO:0000250"/>
    <property type="project" value="UniProtKB"/>
</dbReference>
<dbReference type="GO" id="GO:0002084">
    <property type="term" value="P:protein depalmitoylation"/>
    <property type="evidence" value="ECO:0000250"/>
    <property type="project" value="UniProtKB"/>
</dbReference>
<dbReference type="FunFam" id="3.40.50.1820:FF:000164">
    <property type="entry name" value="Mycophenolic acid acyl-glucuronide esterase, mitochondrial"/>
    <property type="match status" value="1"/>
</dbReference>
<dbReference type="Gene3D" id="3.40.50.1820">
    <property type="entry name" value="alpha/beta hydrolase"/>
    <property type="match status" value="1"/>
</dbReference>
<dbReference type="InterPro" id="IPR000073">
    <property type="entry name" value="AB_hydrolase_1"/>
</dbReference>
<dbReference type="InterPro" id="IPR029058">
    <property type="entry name" value="AB_hydrolase_fold"/>
</dbReference>
<dbReference type="InterPro" id="IPR052382">
    <property type="entry name" value="ABHD10_acyl-thioesterase"/>
</dbReference>
<dbReference type="PANTHER" id="PTHR16138">
    <property type="entry name" value="MYCOPHENOLIC ACID ACYL-GLUCURONIDE ESTERASE, MITOCHONDRIAL"/>
    <property type="match status" value="1"/>
</dbReference>
<dbReference type="PANTHER" id="PTHR16138:SF7">
    <property type="entry name" value="PALMITOYL-PROTEIN THIOESTERASE ABHD10, MITOCHONDRIAL"/>
    <property type="match status" value="1"/>
</dbReference>
<dbReference type="Pfam" id="PF00561">
    <property type="entry name" value="Abhydrolase_1"/>
    <property type="match status" value="1"/>
</dbReference>
<dbReference type="SUPFAM" id="SSF53474">
    <property type="entry name" value="alpha/beta-Hydrolases"/>
    <property type="match status" value="1"/>
</dbReference>
<name>ABHDA_PONAB</name>